<name>TRPC_BACCR</name>
<comment type="catalytic activity">
    <reaction evidence="1">
        <text>1-(2-carboxyphenylamino)-1-deoxy-D-ribulose 5-phosphate + H(+) = (1S,2R)-1-C-(indol-3-yl)glycerol 3-phosphate + CO2 + H2O</text>
        <dbReference type="Rhea" id="RHEA:23476"/>
        <dbReference type="ChEBI" id="CHEBI:15377"/>
        <dbReference type="ChEBI" id="CHEBI:15378"/>
        <dbReference type="ChEBI" id="CHEBI:16526"/>
        <dbReference type="ChEBI" id="CHEBI:58613"/>
        <dbReference type="ChEBI" id="CHEBI:58866"/>
        <dbReference type="EC" id="4.1.1.48"/>
    </reaction>
</comment>
<comment type="pathway">
    <text evidence="1">Amino-acid biosynthesis; L-tryptophan biosynthesis; L-tryptophan from chorismate: step 4/5.</text>
</comment>
<comment type="similarity">
    <text evidence="1">Belongs to the TrpC family.</text>
</comment>
<sequence>MGTILDKIVEQKKKEVAELYEIYTPVKTKRKTQSLVEALQQFTVIAEVKRASPSKGDINLHVDVRKQVGTYEKCGAGAVSVLTDGQFFKGSFHDLQTAREESNIPLLCKDFIIDKIQIDRAYEAGADIILLIVAALTKEKLKELYSYVLEKGLEAIVEVHDEQELETAIVLNPHVIGINNRNLKTFEVDLSQTEKLGKRLNEEKLLWISESGIHSKEDIIRVKRAGAKGVLVGEALMTSSSISSFFEDCKVNI</sequence>
<keyword id="KW-0028">Amino-acid biosynthesis</keyword>
<keyword id="KW-0057">Aromatic amino acid biosynthesis</keyword>
<keyword id="KW-0210">Decarboxylase</keyword>
<keyword id="KW-0456">Lyase</keyword>
<keyword id="KW-1185">Reference proteome</keyword>
<keyword id="KW-0822">Tryptophan biosynthesis</keyword>
<feature type="chain" id="PRO_0000154209" description="Indole-3-glycerol phosphate synthase">
    <location>
        <begin position="1"/>
        <end position="253"/>
    </location>
</feature>
<evidence type="ECO:0000255" key="1">
    <source>
        <dbReference type="HAMAP-Rule" id="MF_00134"/>
    </source>
</evidence>
<accession>Q81GG7</accession>
<organism>
    <name type="scientific">Bacillus cereus (strain ATCC 14579 / DSM 31 / CCUG 7414 / JCM 2152 / NBRC 15305 / NCIMB 9373 / NCTC 2599 / NRRL B-3711)</name>
    <dbReference type="NCBI Taxonomy" id="226900"/>
    <lineage>
        <taxon>Bacteria</taxon>
        <taxon>Bacillati</taxon>
        <taxon>Bacillota</taxon>
        <taxon>Bacilli</taxon>
        <taxon>Bacillales</taxon>
        <taxon>Bacillaceae</taxon>
        <taxon>Bacillus</taxon>
        <taxon>Bacillus cereus group</taxon>
    </lineage>
</organism>
<dbReference type="EC" id="4.1.1.48" evidence="1"/>
<dbReference type="EMBL" id="AE016877">
    <property type="protein sequence ID" value="AAP08220.1"/>
    <property type="molecule type" value="Genomic_DNA"/>
</dbReference>
<dbReference type="RefSeq" id="NP_831019.1">
    <property type="nucleotide sequence ID" value="NC_004722.1"/>
</dbReference>
<dbReference type="RefSeq" id="WP_000536703.1">
    <property type="nucleotide sequence ID" value="NZ_CP138336.1"/>
</dbReference>
<dbReference type="SMR" id="Q81GG7"/>
<dbReference type="STRING" id="226900.BC_1235"/>
<dbReference type="KEGG" id="bce:BC1235"/>
<dbReference type="PATRIC" id="fig|226900.8.peg.1206"/>
<dbReference type="HOGENOM" id="CLU_034247_2_0_9"/>
<dbReference type="OrthoDB" id="9804217at2"/>
<dbReference type="UniPathway" id="UPA00035">
    <property type="reaction ID" value="UER00043"/>
</dbReference>
<dbReference type="Proteomes" id="UP000001417">
    <property type="component" value="Chromosome"/>
</dbReference>
<dbReference type="GO" id="GO:0004425">
    <property type="term" value="F:indole-3-glycerol-phosphate synthase activity"/>
    <property type="evidence" value="ECO:0000318"/>
    <property type="project" value="GO_Central"/>
</dbReference>
<dbReference type="GO" id="GO:0004640">
    <property type="term" value="F:phosphoribosylanthranilate isomerase activity"/>
    <property type="evidence" value="ECO:0000318"/>
    <property type="project" value="GO_Central"/>
</dbReference>
<dbReference type="GO" id="GO:0000162">
    <property type="term" value="P:L-tryptophan biosynthetic process"/>
    <property type="evidence" value="ECO:0000318"/>
    <property type="project" value="GO_Central"/>
</dbReference>
<dbReference type="CDD" id="cd00331">
    <property type="entry name" value="IGPS"/>
    <property type="match status" value="1"/>
</dbReference>
<dbReference type="FunFam" id="3.20.20.70:FF:000024">
    <property type="entry name" value="Indole-3-glycerol phosphate synthase"/>
    <property type="match status" value="1"/>
</dbReference>
<dbReference type="Gene3D" id="3.20.20.70">
    <property type="entry name" value="Aldolase class I"/>
    <property type="match status" value="1"/>
</dbReference>
<dbReference type="HAMAP" id="MF_00134_B">
    <property type="entry name" value="IGPS_B"/>
    <property type="match status" value="1"/>
</dbReference>
<dbReference type="InterPro" id="IPR013785">
    <property type="entry name" value="Aldolase_TIM"/>
</dbReference>
<dbReference type="InterPro" id="IPR045186">
    <property type="entry name" value="Indole-3-glycerol_P_synth"/>
</dbReference>
<dbReference type="InterPro" id="IPR013798">
    <property type="entry name" value="Indole-3-glycerol_P_synth_dom"/>
</dbReference>
<dbReference type="InterPro" id="IPR001468">
    <property type="entry name" value="Indole-3-GlycerolPSynthase_CS"/>
</dbReference>
<dbReference type="InterPro" id="IPR011060">
    <property type="entry name" value="RibuloseP-bd_barrel"/>
</dbReference>
<dbReference type="NCBIfam" id="NF001371">
    <property type="entry name" value="PRK00278.1-3"/>
    <property type="match status" value="1"/>
</dbReference>
<dbReference type="NCBIfam" id="NF001377">
    <property type="entry name" value="PRK00278.2-4"/>
    <property type="match status" value="1"/>
</dbReference>
<dbReference type="PANTHER" id="PTHR22854:SF2">
    <property type="entry name" value="INDOLE-3-GLYCEROL-PHOSPHATE SYNTHASE"/>
    <property type="match status" value="1"/>
</dbReference>
<dbReference type="PANTHER" id="PTHR22854">
    <property type="entry name" value="TRYPTOPHAN BIOSYNTHESIS PROTEIN"/>
    <property type="match status" value="1"/>
</dbReference>
<dbReference type="Pfam" id="PF00218">
    <property type="entry name" value="IGPS"/>
    <property type="match status" value="1"/>
</dbReference>
<dbReference type="SUPFAM" id="SSF51366">
    <property type="entry name" value="Ribulose-phoshate binding barrel"/>
    <property type="match status" value="1"/>
</dbReference>
<dbReference type="PROSITE" id="PS00614">
    <property type="entry name" value="IGPS"/>
    <property type="match status" value="1"/>
</dbReference>
<proteinExistence type="inferred from homology"/>
<gene>
    <name evidence="1" type="primary">trpC</name>
    <name type="ordered locus">BC_1235</name>
</gene>
<protein>
    <recommendedName>
        <fullName evidence="1">Indole-3-glycerol phosphate synthase</fullName>
        <shortName evidence="1">IGPS</shortName>
        <ecNumber evidence="1">4.1.1.48</ecNumber>
    </recommendedName>
</protein>
<reference key="1">
    <citation type="journal article" date="2003" name="Nature">
        <title>Genome sequence of Bacillus cereus and comparative analysis with Bacillus anthracis.</title>
        <authorList>
            <person name="Ivanova N."/>
            <person name="Sorokin A."/>
            <person name="Anderson I."/>
            <person name="Galleron N."/>
            <person name="Candelon B."/>
            <person name="Kapatral V."/>
            <person name="Bhattacharyya A."/>
            <person name="Reznik G."/>
            <person name="Mikhailova N."/>
            <person name="Lapidus A."/>
            <person name="Chu L."/>
            <person name="Mazur M."/>
            <person name="Goltsman E."/>
            <person name="Larsen N."/>
            <person name="D'Souza M."/>
            <person name="Walunas T."/>
            <person name="Grechkin Y."/>
            <person name="Pusch G."/>
            <person name="Haselkorn R."/>
            <person name="Fonstein M."/>
            <person name="Ehrlich S.D."/>
            <person name="Overbeek R."/>
            <person name="Kyrpides N.C."/>
        </authorList>
    </citation>
    <scope>NUCLEOTIDE SEQUENCE [LARGE SCALE GENOMIC DNA]</scope>
    <source>
        <strain>ATCC 14579 / DSM 31 / CCUG 7414 / JCM 2152 / NBRC 15305 / NCIMB 9373 / NCTC 2599 / NRRL B-3711</strain>
    </source>
</reference>